<accession>Q65Q31</accession>
<proteinExistence type="inferred from homology"/>
<reference key="1">
    <citation type="journal article" date="2004" name="Nat. Biotechnol.">
        <title>The genome sequence of the capnophilic rumen bacterium Mannheimia succiniciproducens.</title>
        <authorList>
            <person name="Hong S.H."/>
            <person name="Kim J.S."/>
            <person name="Lee S.Y."/>
            <person name="In Y.H."/>
            <person name="Choi S.S."/>
            <person name="Rih J.-K."/>
            <person name="Kim C.H."/>
            <person name="Jeong H."/>
            <person name="Hur C.G."/>
            <person name="Kim J.J."/>
        </authorList>
    </citation>
    <scope>NUCLEOTIDE SEQUENCE [LARGE SCALE GENOMIC DNA]</scope>
    <source>
        <strain>KCTC 0769BP / MBEL55E</strain>
    </source>
</reference>
<sequence>MIQKLLARDFFNNKEQPIILEPRAPQEIFPEHTHDFDELVIVKHGSGRHILNGYPHDLYPGVVLYIQAQDHHSYENLQDLCLTNILIQSNNNFKYLNNIDILLNGLKPENSSYQLINKKTAEYIDSLLEKINAIDESYNLQNECLFFQVLSSIQAHQFNDSGYGNTEEKGRQMIRWLENNFEKEIDWEELAEKFALPIRTLHRYIKSQTGHTPQNYVTKLRLAQAYYQLKYTEKNIINIAYDCGFNDSSYFSTCFKNEYSIAPRELRI</sequence>
<keyword id="KW-0010">Activator</keyword>
<keyword id="KW-0963">Cytoplasm</keyword>
<keyword id="KW-0238">DNA-binding</keyword>
<keyword id="KW-0677">Repeat</keyword>
<keyword id="KW-0684">Rhamnose metabolism</keyword>
<keyword id="KW-0804">Transcription</keyword>
<keyword id="KW-0805">Transcription regulation</keyword>
<comment type="function">
    <text evidence="1">Activates expression of the rhaBAD and rhaT operons.</text>
</comment>
<comment type="subunit">
    <text evidence="1">Binds DNA as a dimer.</text>
</comment>
<comment type="subcellular location">
    <subcellularLocation>
        <location evidence="1">Cytoplasm</location>
    </subcellularLocation>
</comment>
<organism>
    <name type="scientific">Mannheimia succiniciproducens (strain KCTC 0769BP / MBEL55E)</name>
    <dbReference type="NCBI Taxonomy" id="221988"/>
    <lineage>
        <taxon>Bacteria</taxon>
        <taxon>Pseudomonadati</taxon>
        <taxon>Pseudomonadota</taxon>
        <taxon>Gammaproteobacteria</taxon>
        <taxon>Pasteurellales</taxon>
        <taxon>Pasteurellaceae</taxon>
        <taxon>Basfia</taxon>
    </lineage>
</organism>
<feature type="chain" id="PRO_0000194567" description="HTH-type transcriptional activator RhaS">
    <location>
        <begin position="1"/>
        <end position="268"/>
    </location>
</feature>
<feature type="domain" description="HTH araC/xylS-type" evidence="1">
    <location>
        <begin position="171"/>
        <end position="268"/>
    </location>
</feature>
<feature type="DNA-binding region" description="H-T-H motif" evidence="1">
    <location>
        <begin position="188"/>
        <end position="209"/>
    </location>
</feature>
<feature type="DNA-binding region" description="H-T-H motif" evidence="1">
    <location>
        <begin position="236"/>
        <end position="259"/>
    </location>
</feature>
<feature type="site" description="Interaction with sigma-70" evidence="1">
    <location>
        <position position="247"/>
    </location>
</feature>
<name>RHAS_MANSM</name>
<protein>
    <recommendedName>
        <fullName evidence="1">HTH-type transcriptional activator RhaS</fullName>
    </recommendedName>
    <alternativeName>
        <fullName evidence="1">L-rhamnose operon regulatory protein RhaS</fullName>
    </alternativeName>
</protein>
<dbReference type="EMBL" id="AE016827">
    <property type="protein sequence ID" value="AAU38929.1"/>
    <property type="molecule type" value="Genomic_DNA"/>
</dbReference>
<dbReference type="RefSeq" id="WP_011201467.1">
    <property type="nucleotide sequence ID" value="NC_006300.1"/>
</dbReference>
<dbReference type="SMR" id="Q65Q31"/>
<dbReference type="STRING" id="221988.MS2322"/>
<dbReference type="KEGG" id="msu:MS2322"/>
<dbReference type="eggNOG" id="COG4977">
    <property type="taxonomic scope" value="Bacteria"/>
</dbReference>
<dbReference type="HOGENOM" id="CLU_000445_88_5_6"/>
<dbReference type="OrthoDB" id="2547276at2"/>
<dbReference type="Proteomes" id="UP000000607">
    <property type="component" value="Chromosome"/>
</dbReference>
<dbReference type="GO" id="GO:0005737">
    <property type="term" value="C:cytoplasm"/>
    <property type="evidence" value="ECO:0007669"/>
    <property type="project" value="UniProtKB-SubCell"/>
</dbReference>
<dbReference type="GO" id="GO:0003700">
    <property type="term" value="F:DNA-binding transcription factor activity"/>
    <property type="evidence" value="ECO:0007669"/>
    <property type="project" value="UniProtKB-UniRule"/>
</dbReference>
<dbReference type="GO" id="GO:0043565">
    <property type="term" value="F:sequence-specific DNA binding"/>
    <property type="evidence" value="ECO:0007669"/>
    <property type="project" value="InterPro"/>
</dbReference>
<dbReference type="GO" id="GO:0045893">
    <property type="term" value="P:positive regulation of DNA-templated transcription"/>
    <property type="evidence" value="ECO:0007669"/>
    <property type="project" value="UniProtKB-UniRule"/>
</dbReference>
<dbReference type="GO" id="GO:0019299">
    <property type="term" value="P:rhamnose metabolic process"/>
    <property type="evidence" value="ECO:0007669"/>
    <property type="project" value="UniProtKB-UniRule"/>
</dbReference>
<dbReference type="CDD" id="cd06977">
    <property type="entry name" value="cupin_RhaR_RhaS-like_N"/>
    <property type="match status" value="1"/>
</dbReference>
<dbReference type="Gene3D" id="1.10.10.60">
    <property type="entry name" value="Homeodomain-like"/>
    <property type="match status" value="2"/>
</dbReference>
<dbReference type="Gene3D" id="2.60.120.10">
    <property type="entry name" value="Jelly Rolls"/>
    <property type="match status" value="1"/>
</dbReference>
<dbReference type="HAMAP" id="MF_01534">
    <property type="entry name" value="HTH_type_RhaS"/>
    <property type="match status" value="1"/>
</dbReference>
<dbReference type="InterPro" id="IPR003313">
    <property type="entry name" value="AraC-bd"/>
</dbReference>
<dbReference type="InterPro" id="IPR009057">
    <property type="entry name" value="Homeodomain-like_sf"/>
</dbReference>
<dbReference type="InterPro" id="IPR018060">
    <property type="entry name" value="HTH_AraC"/>
</dbReference>
<dbReference type="InterPro" id="IPR047220">
    <property type="entry name" value="RhaR_RhaS-like_N"/>
</dbReference>
<dbReference type="InterPro" id="IPR014710">
    <property type="entry name" value="RmlC-like_jellyroll"/>
</dbReference>
<dbReference type="InterPro" id="IPR011051">
    <property type="entry name" value="RmlC_Cupin_sf"/>
</dbReference>
<dbReference type="InterPro" id="IPR020449">
    <property type="entry name" value="Tscrpt_reg_AraC-type_HTH"/>
</dbReference>
<dbReference type="InterPro" id="IPR023609">
    <property type="entry name" value="Tscrpt_reg_HTH_RhaS"/>
</dbReference>
<dbReference type="NCBIfam" id="NF010028">
    <property type="entry name" value="PRK13503.1"/>
    <property type="match status" value="1"/>
</dbReference>
<dbReference type="PANTHER" id="PTHR43280">
    <property type="entry name" value="ARAC-FAMILY TRANSCRIPTIONAL REGULATOR"/>
    <property type="match status" value="1"/>
</dbReference>
<dbReference type="PANTHER" id="PTHR43280:SF28">
    <property type="entry name" value="HTH-TYPE TRANSCRIPTIONAL ACTIVATOR RHAS"/>
    <property type="match status" value="1"/>
</dbReference>
<dbReference type="Pfam" id="PF02311">
    <property type="entry name" value="AraC_binding"/>
    <property type="match status" value="1"/>
</dbReference>
<dbReference type="Pfam" id="PF12833">
    <property type="entry name" value="HTH_18"/>
    <property type="match status" value="1"/>
</dbReference>
<dbReference type="PRINTS" id="PR00032">
    <property type="entry name" value="HTHARAC"/>
</dbReference>
<dbReference type="SMART" id="SM00342">
    <property type="entry name" value="HTH_ARAC"/>
    <property type="match status" value="1"/>
</dbReference>
<dbReference type="SUPFAM" id="SSF46689">
    <property type="entry name" value="Homeodomain-like"/>
    <property type="match status" value="2"/>
</dbReference>
<dbReference type="SUPFAM" id="SSF51182">
    <property type="entry name" value="RmlC-like cupins"/>
    <property type="match status" value="1"/>
</dbReference>
<dbReference type="PROSITE" id="PS01124">
    <property type="entry name" value="HTH_ARAC_FAMILY_2"/>
    <property type="match status" value="1"/>
</dbReference>
<evidence type="ECO:0000255" key="1">
    <source>
        <dbReference type="HAMAP-Rule" id="MF_01534"/>
    </source>
</evidence>
<gene>
    <name evidence="1" type="primary">rhaS</name>
    <name type="ordered locus">MS2322</name>
</gene>